<comment type="function">
    <text evidence="1">Participates actively in the response to hyperosmotic and heat shock by preventing the aggregation of stress-denatured proteins and by disaggregating proteins, also in an autonomous, DnaK-independent fashion. Unfolded proteins bind initially to DnaJ; upon interaction with the DnaJ-bound protein, DnaK hydrolyzes its bound ATP, resulting in the formation of a stable complex. GrpE releases ADP from DnaK; ATP binding to DnaK triggers the release of the substrate protein, thus completing the reaction cycle. Several rounds of ATP-dependent interactions between DnaJ, DnaK and GrpE are required for fully efficient folding. Also involved, together with DnaK and GrpE, in the DNA replication of plasmids through activation of initiation proteins.</text>
</comment>
<comment type="cofactor">
    <cofactor evidence="1">
        <name>Zn(2+)</name>
        <dbReference type="ChEBI" id="CHEBI:29105"/>
    </cofactor>
    <text evidence="1">Binds 2 Zn(2+) ions per monomer.</text>
</comment>
<comment type="subunit">
    <text evidence="1">Homodimer.</text>
</comment>
<comment type="subcellular location">
    <subcellularLocation>
        <location evidence="1">Cytoplasm</location>
    </subcellularLocation>
</comment>
<comment type="domain">
    <text evidence="1">The J domain is necessary and sufficient to stimulate DnaK ATPase activity. Zinc center 1 plays an important role in the autonomous, DnaK-independent chaperone activity of DnaJ. Zinc center 2 is essential for interaction with DnaK and for DnaJ activity.</text>
</comment>
<comment type="similarity">
    <text evidence="1">Belongs to the DnaJ family.</text>
</comment>
<protein>
    <recommendedName>
        <fullName evidence="1">Chaperone protein DnaJ</fullName>
    </recommendedName>
</protein>
<accession>A6LJ63</accession>
<gene>
    <name evidence="1" type="primary">dnaJ</name>
    <name type="ordered locus">Tmel_0087</name>
</gene>
<organism>
    <name type="scientific">Thermosipho melanesiensis (strain DSM 12029 / CIP 104789 / BI429)</name>
    <dbReference type="NCBI Taxonomy" id="391009"/>
    <lineage>
        <taxon>Bacteria</taxon>
        <taxon>Thermotogati</taxon>
        <taxon>Thermotogota</taxon>
        <taxon>Thermotogae</taxon>
        <taxon>Thermotogales</taxon>
        <taxon>Fervidobacteriaceae</taxon>
        <taxon>Thermosipho</taxon>
    </lineage>
</organism>
<proteinExistence type="inferred from homology"/>
<evidence type="ECO:0000255" key="1">
    <source>
        <dbReference type="HAMAP-Rule" id="MF_01152"/>
    </source>
</evidence>
<sequence>MAKKDYYEILGVSRNATQEEIRQAYKKLIKKWHPDRNYENKKLAEEKFKEIQEAYEVLSDPEKRAMYDKFGYVGDVPPNAGGGFRGFGGFEDIFKDFGDFINNDIFNIFFGDQRTSSRKRTKTPRKGEDINISVDVSFEELFTGVKIPLEYDRYEVCEHCHGEGVEPGSGWVTCPKCHGTGTVREERRTFLGVIVNQYTCNQCGGTGKIPGESCRVCGGTGRIRKRHRIEVNIPAGVENGTILRIQGGGHAGYYGGGYGDLYVHVRVVGYTSFERKGNNLIKDLKIDYVDAILGTKVKIKMPDGKIKEVKIPSGVQHGQEIYVYGEGIPDMRTGRRGDLILRINVGIPTKVSRTEKKLLKEIAKLRGKDVRED</sequence>
<dbReference type="EMBL" id="CP000716">
    <property type="protein sequence ID" value="ABR29964.1"/>
    <property type="molecule type" value="Genomic_DNA"/>
</dbReference>
<dbReference type="RefSeq" id="WP_012056326.1">
    <property type="nucleotide sequence ID" value="NC_009616.1"/>
</dbReference>
<dbReference type="SMR" id="A6LJ63"/>
<dbReference type="STRING" id="391009.Tmel_0087"/>
<dbReference type="KEGG" id="tme:Tmel_0087"/>
<dbReference type="eggNOG" id="COG0484">
    <property type="taxonomic scope" value="Bacteria"/>
</dbReference>
<dbReference type="HOGENOM" id="CLU_017633_0_7_0"/>
<dbReference type="OrthoDB" id="9779889at2"/>
<dbReference type="Proteomes" id="UP000001110">
    <property type="component" value="Chromosome"/>
</dbReference>
<dbReference type="GO" id="GO:0005737">
    <property type="term" value="C:cytoplasm"/>
    <property type="evidence" value="ECO:0007669"/>
    <property type="project" value="UniProtKB-SubCell"/>
</dbReference>
<dbReference type="GO" id="GO:0005524">
    <property type="term" value="F:ATP binding"/>
    <property type="evidence" value="ECO:0007669"/>
    <property type="project" value="InterPro"/>
</dbReference>
<dbReference type="GO" id="GO:0031072">
    <property type="term" value="F:heat shock protein binding"/>
    <property type="evidence" value="ECO:0007669"/>
    <property type="project" value="InterPro"/>
</dbReference>
<dbReference type="GO" id="GO:0051082">
    <property type="term" value="F:unfolded protein binding"/>
    <property type="evidence" value="ECO:0007669"/>
    <property type="project" value="UniProtKB-UniRule"/>
</dbReference>
<dbReference type="GO" id="GO:0008270">
    <property type="term" value="F:zinc ion binding"/>
    <property type="evidence" value="ECO:0007669"/>
    <property type="project" value="UniProtKB-UniRule"/>
</dbReference>
<dbReference type="GO" id="GO:0051085">
    <property type="term" value="P:chaperone cofactor-dependent protein refolding"/>
    <property type="evidence" value="ECO:0007669"/>
    <property type="project" value="TreeGrafter"/>
</dbReference>
<dbReference type="GO" id="GO:0006260">
    <property type="term" value="P:DNA replication"/>
    <property type="evidence" value="ECO:0007669"/>
    <property type="project" value="UniProtKB-KW"/>
</dbReference>
<dbReference type="GO" id="GO:0042026">
    <property type="term" value="P:protein refolding"/>
    <property type="evidence" value="ECO:0007669"/>
    <property type="project" value="TreeGrafter"/>
</dbReference>
<dbReference type="GO" id="GO:0009408">
    <property type="term" value="P:response to heat"/>
    <property type="evidence" value="ECO:0007669"/>
    <property type="project" value="InterPro"/>
</dbReference>
<dbReference type="CDD" id="cd06257">
    <property type="entry name" value="DnaJ"/>
    <property type="match status" value="1"/>
</dbReference>
<dbReference type="CDD" id="cd10747">
    <property type="entry name" value="DnaJ_C"/>
    <property type="match status" value="1"/>
</dbReference>
<dbReference type="CDD" id="cd10719">
    <property type="entry name" value="DnaJ_zf"/>
    <property type="match status" value="1"/>
</dbReference>
<dbReference type="FunFam" id="1.10.287.110:FF:000034">
    <property type="entry name" value="Chaperone protein DnaJ"/>
    <property type="match status" value="1"/>
</dbReference>
<dbReference type="FunFam" id="2.60.260.20:FF:000013">
    <property type="entry name" value="DnaJ subfamily B member 11"/>
    <property type="match status" value="1"/>
</dbReference>
<dbReference type="FunFam" id="2.10.230.10:FF:000002">
    <property type="entry name" value="Molecular chaperone DnaJ"/>
    <property type="match status" value="1"/>
</dbReference>
<dbReference type="Gene3D" id="1.10.287.110">
    <property type="entry name" value="DnaJ domain"/>
    <property type="match status" value="1"/>
</dbReference>
<dbReference type="Gene3D" id="2.10.230.10">
    <property type="entry name" value="Heat shock protein DnaJ, cysteine-rich domain"/>
    <property type="match status" value="1"/>
</dbReference>
<dbReference type="Gene3D" id="2.60.260.20">
    <property type="entry name" value="Urease metallochaperone UreE, N-terminal domain"/>
    <property type="match status" value="2"/>
</dbReference>
<dbReference type="HAMAP" id="MF_01152">
    <property type="entry name" value="DnaJ"/>
    <property type="match status" value="1"/>
</dbReference>
<dbReference type="InterPro" id="IPR012724">
    <property type="entry name" value="DnaJ"/>
</dbReference>
<dbReference type="InterPro" id="IPR002939">
    <property type="entry name" value="DnaJ_C"/>
</dbReference>
<dbReference type="InterPro" id="IPR001623">
    <property type="entry name" value="DnaJ_domain"/>
</dbReference>
<dbReference type="InterPro" id="IPR018253">
    <property type="entry name" value="DnaJ_domain_CS"/>
</dbReference>
<dbReference type="InterPro" id="IPR008971">
    <property type="entry name" value="HSP40/DnaJ_pept-bd"/>
</dbReference>
<dbReference type="InterPro" id="IPR001305">
    <property type="entry name" value="HSP_DnaJ_Cys-rich_dom"/>
</dbReference>
<dbReference type="InterPro" id="IPR036410">
    <property type="entry name" value="HSP_DnaJ_Cys-rich_dom_sf"/>
</dbReference>
<dbReference type="InterPro" id="IPR036869">
    <property type="entry name" value="J_dom_sf"/>
</dbReference>
<dbReference type="NCBIfam" id="TIGR02349">
    <property type="entry name" value="DnaJ_bact"/>
    <property type="match status" value="1"/>
</dbReference>
<dbReference type="NCBIfam" id="NF008035">
    <property type="entry name" value="PRK10767.1"/>
    <property type="match status" value="1"/>
</dbReference>
<dbReference type="NCBIfam" id="NF010875">
    <property type="entry name" value="PRK14282.1"/>
    <property type="match status" value="1"/>
</dbReference>
<dbReference type="PANTHER" id="PTHR43096">
    <property type="entry name" value="DNAJ HOMOLOG 1, MITOCHONDRIAL-RELATED"/>
    <property type="match status" value="1"/>
</dbReference>
<dbReference type="PANTHER" id="PTHR43096:SF52">
    <property type="entry name" value="DNAJ HOMOLOG 1, MITOCHONDRIAL-RELATED"/>
    <property type="match status" value="1"/>
</dbReference>
<dbReference type="Pfam" id="PF00226">
    <property type="entry name" value="DnaJ"/>
    <property type="match status" value="1"/>
</dbReference>
<dbReference type="Pfam" id="PF01556">
    <property type="entry name" value="DnaJ_C"/>
    <property type="match status" value="1"/>
</dbReference>
<dbReference type="Pfam" id="PF00684">
    <property type="entry name" value="DnaJ_CXXCXGXG"/>
    <property type="match status" value="1"/>
</dbReference>
<dbReference type="PRINTS" id="PR00625">
    <property type="entry name" value="JDOMAIN"/>
</dbReference>
<dbReference type="SMART" id="SM00271">
    <property type="entry name" value="DnaJ"/>
    <property type="match status" value="1"/>
</dbReference>
<dbReference type="SUPFAM" id="SSF46565">
    <property type="entry name" value="Chaperone J-domain"/>
    <property type="match status" value="1"/>
</dbReference>
<dbReference type="SUPFAM" id="SSF57938">
    <property type="entry name" value="DnaJ/Hsp40 cysteine-rich domain"/>
    <property type="match status" value="1"/>
</dbReference>
<dbReference type="SUPFAM" id="SSF49493">
    <property type="entry name" value="HSP40/DnaJ peptide-binding domain"/>
    <property type="match status" value="2"/>
</dbReference>
<dbReference type="PROSITE" id="PS00636">
    <property type="entry name" value="DNAJ_1"/>
    <property type="match status" value="1"/>
</dbReference>
<dbReference type="PROSITE" id="PS50076">
    <property type="entry name" value="DNAJ_2"/>
    <property type="match status" value="1"/>
</dbReference>
<dbReference type="PROSITE" id="PS51188">
    <property type="entry name" value="ZF_CR"/>
    <property type="match status" value="1"/>
</dbReference>
<name>DNAJ_THEM4</name>
<reference key="1">
    <citation type="submission" date="2007-05" db="EMBL/GenBank/DDBJ databases">
        <title>Complete sequence of Thermosipho melanesiensis BI429.</title>
        <authorList>
            <consortium name="US DOE Joint Genome Institute"/>
            <person name="Copeland A."/>
            <person name="Lucas S."/>
            <person name="Lapidus A."/>
            <person name="Barry K."/>
            <person name="Glavina del Rio T."/>
            <person name="Dalin E."/>
            <person name="Tice H."/>
            <person name="Pitluck S."/>
            <person name="Chertkov O."/>
            <person name="Brettin T."/>
            <person name="Bruce D."/>
            <person name="Detter J.C."/>
            <person name="Han C."/>
            <person name="Schmutz J."/>
            <person name="Larimer F."/>
            <person name="Land M."/>
            <person name="Hauser L."/>
            <person name="Kyrpides N."/>
            <person name="Mikhailova N."/>
            <person name="Nelson K."/>
            <person name="Gogarten J.P."/>
            <person name="Noll K."/>
            <person name="Richardson P."/>
        </authorList>
    </citation>
    <scope>NUCLEOTIDE SEQUENCE [LARGE SCALE GENOMIC DNA]</scope>
    <source>
        <strain>DSM 12029 / CIP 104789 / BI429</strain>
    </source>
</reference>
<feature type="chain" id="PRO_1000137734" description="Chaperone protein DnaJ">
    <location>
        <begin position="1"/>
        <end position="373"/>
    </location>
</feature>
<feature type="domain" description="J" evidence="1">
    <location>
        <begin position="5"/>
        <end position="71"/>
    </location>
</feature>
<feature type="repeat" description="CXXCXGXG motif">
    <location>
        <begin position="157"/>
        <end position="164"/>
    </location>
</feature>
<feature type="repeat" description="CXXCXGXG motif">
    <location>
        <begin position="174"/>
        <end position="181"/>
    </location>
</feature>
<feature type="repeat" description="CXXCXGXG motif">
    <location>
        <begin position="200"/>
        <end position="207"/>
    </location>
</feature>
<feature type="repeat" description="CXXCXGXG motif">
    <location>
        <begin position="214"/>
        <end position="221"/>
    </location>
</feature>
<feature type="zinc finger region" description="CR-type" evidence="1">
    <location>
        <begin position="144"/>
        <end position="226"/>
    </location>
</feature>
<feature type="binding site" evidence="1">
    <location>
        <position position="157"/>
    </location>
    <ligand>
        <name>Zn(2+)</name>
        <dbReference type="ChEBI" id="CHEBI:29105"/>
        <label>1</label>
    </ligand>
</feature>
<feature type="binding site" evidence="1">
    <location>
        <position position="160"/>
    </location>
    <ligand>
        <name>Zn(2+)</name>
        <dbReference type="ChEBI" id="CHEBI:29105"/>
        <label>1</label>
    </ligand>
</feature>
<feature type="binding site" evidence="1">
    <location>
        <position position="174"/>
    </location>
    <ligand>
        <name>Zn(2+)</name>
        <dbReference type="ChEBI" id="CHEBI:29105"/>
        <label>2</label>
    </ligand>
</feature>
<feature type="binding site" evidence="1">
    <location>
        <position position="177"/>
    </location>
    <ligand>
        <name>Zn(2+)</name>
        <dbReference type="ChEBI" id="CHEBI:29105"/>
        <label>2</label>
    </ligand>
</feature>
<feature type="binding site" evidence="1">
    <location>
        <position position="200"/>
    </location>
    <ligand>
        <name>Zn(2+)</name>
        <dbReference type="ChEBI" id="CHEBI:29105"/>
        <label>2</label>
    </ligand>
</feature>
<feature type="binding site" evidence="1">
    <location>
        <position position="203"/>
    </location>
    <ligand>
        <name>Zn(2+)</name>
        <dbReference type="ChEBI" id="CHEBI:29105"/>
        <label>2</label>
    </ligand>
</feature>
<feature type="binding site" evidence="1">
    <location>
        <position position="214"/>
    </location>
    <ligand>
        <name>Zn(2+)</name>
        <dbReference type="ChEBI" id="CHEBI:29105"/>
        <label>1</label>
    </ligand>
</feature>
<feature type="binding site" evidence="1">
    <location>
        <position position="217"/>
    </location>
    <ligand>
        <name>Zn(2+)</name>
        <dbReference type="ChEBI" id="CHEBI:29105"/>
        <label>1</label>
    </ligand>
</feature>
<keyword id="KW-0143">Chaperone</keyword>
<keyword id="KW-0963">Cytoplasm</keyword>
<keyword id="KW-0235">DNA replication</keyword>
<keyword id="KW-0479">Metal-binding</keyword>
<keyword id="KW-0677">Repeat</keyword>
<keyword id="KW-0346">Stress response</keyword>
<keyword id="KW-0862">Zinc</keyword>
<keyword id="KW-0863">Zinc-finger</keyword>